<comment type="function">
    <text evidence="1">Sequence-specific transcription factor which is part of a developmental regulatory system that provides cells with specific positional identities on the anterior-posterior axis.</text>
</comment>
<comment type="subcellular location">
    <subcellularLocation>
        <location evidence="2">Nucleus</location>
    </subcellularLocation>
</comment>
<comment type="similarity">
    <text evidence="4">Belongs to the Antp homeobox family.</text>
</comment>
<feature type="chain" id="PRO_0000285438" description="Homeobox protein Hox-D8">
    <location>
        <begin position="1"/>
        <end position="290"/>
    </location>
</feature>
<feature type="DNA-binding region" description="Homeobox" evidence="2">
    <location>
        <begin position="197"/>
        <end position="256"/>
    </location>
</feature>
<feature type="region of interest" description="Disordered" evidence="3">
    <location>
        <begin position="60"/>
        <end position="127"/>
    </location>
</feature>
<feature type="region of interest" description="Disordered" evidence="3">
    <location>
        <begin position="161"/>
        <end position="201"/>
    </location>
</feature>
<feature type="region of interest" description="Disordered" evidence="3">
    <location>
        <begin position="255"/>
        <end position="290"/>
    </location>
</feature>
<feature type="compositionally biased region" description="Low complexity" evidence="3">
    <location>
        <begin position="60"/>
        <end position="69"/>
    </location>
</feature>
<feature type="compositionally biased region" description="Pro residues" evidence="3">
    <location>
        <begin position="108"/>
        <end position="124"/>
    </location>
</feature>
<feature type="compositionally biased region" description="Basic and acidic residues" evidence="3">
    <location>
        <begin position="255"/>
        <end position="278"/>
    </location>
</feature>
<gene>
    <name type="primary">HOXD8</name>
</gene>
<accession>A2T748</accession>
<evidence type="ECO:0000250" key="1"/>
<evidence type="ECO:0000255" key="2">
    <source>
        <dbReference type="PROSITE-ProRule" id="PRU00108"/>
    </source>
</evidence>
<evidence type="ECO:0000256" key="3">
    <source>
        <dbReference type="SAM" id="MobiDB-lite"/>
    </source>
</evidence>
<evidence type="ECO:0000305" key="4"/>
<keyword id="KW-0217">Developmental protein</keyword>
<keyword id="KW-0238">DNA-binding</keyword>
<keyword id="KW-0371">Homeobox</keyword>
<keyword id="KW-0539">Nucleus</keyword>
<keyword id="KW-1185">Reference proteome</keyword>
<keyword id="KW-0804">Transcription</keyword>
<keyword id="KW-0805">Transcription regulation</keyword>
<name>HXD8_PANTR</name>
<dbReference type="EMBL" id="DQ977370">
    <property type="protein sequence ID" value="ABM92003.1"/>
    <property type="molecule type" value="Genomic_DNA"/>
</dbReference>
<dbReference type="RefSeq" id="NP_001074950.1">
    <property type="nucleotide sequence ID" value="NM_001081481.1"/>
</dbReference>
<dbReference type="SMR" id="A2T748"/>
<dbReference type="FunCoup" id="A2T748">
    <property type="interactions" value="1101"/>
</dbReference>
<dbReference type="STRING" id="9598.ENSPTRP00000054685"/>
<dbReference type="PaxDb" id="9598-ENSPTRP00000054685"/>
<dbReference type="GeneID" id="459763"/>
<dbReference type="KEGG" id="ptr:459763"/>
<dbReference type="CTD" id="3234"/>
<dbReference type="eggNOG" id="KOG0489">
    <property type="taxonomic scope" value="Eukaryota"/>
</dbReference>
<dbReference type="HOGENOM" id="CLU_061398_1_0_1"/>
<dbReference type="InParanoid" id="A2T748"/>
<dbReference type="OrthoDB" id="16512at9604"/>
<dbReference type="TreeFam" id="TF316310"/>
<dbReference type="Proteomes" id="UP000002277">
    <property type="component" value="Unplaced"/>
</dbReference>
<dbReference type="GO" id="GO:0005634">
    <property type="term" value="C:nucleus"/>
    <property type="evidence" value="ECO:0000318"/>
    <property type="project" value="GO_Central"/>
</dbReference>
<dbReference type="GO" id="GO:0000981">
    <property type="term" value="F:DNA-binding transcription factor activity, RNA polymerase II-specific"/>
    <property type="evidence" value="ECO:0000318"/>
    <property type="project" value="GO_Central"/>
</dbReference>
<dbReference type="GO" id="GO:0000977">
    <property type="term" value="F:RNA polymerase II transcription regulatory region sequence-specific DNA binding"/>
    <property type="evidence" value="ECO:0000318"/>
    <property type="project" value="GO_Central"/>
</dbReference>
<dbReference type="GO" id="GO:0006357">
    <property type="term" value="P:regulation of transcription by RNA polymerase II"/>
    <property type="evidence" value="ECO:0000318"/>
    <property type="project" value="GO_Central"/>
</dbReference>
<dbReference type="CDD" id="cd00086">
    <property type="entry name" value="homeodomain"/>
    <property type="match status" value="1"/>
</dbReference>
<dbReference type="FunFam" id="1.10.10.60:FF:000072">
    <property type="entry name" value="Homeobox protein Hox-B8"/>
    <property type="match status" value="1"/>
</dbReference>
<dbReference type="Gene3D" id="1.10.10.60">
    <property type="entry name" value="Homeodomain-like"/>
    <property type="match status" value="1"/>
</dbReference>
<dbReference type="InterPro" id="IPR050948">
    <property type="entry name" value="Antp_homeobox_TF"/>
</dbReference>
<dbReference type="InterPro" id="IPR001356">
    <property type="entry name" value="HD"/>
</dbReference>
<dbReference type="InterPro" id="IPR020479">
    <property type="entry name" value="HD_metazoa"/>
</dbReference>
<dbReference type="InterPro" id="IPR001827">
    <property type="entry name" value="Homeobox_Antennapedia_CS"/>
</dbReference>
<dbReference type="InterPro" id="IPR017970">
    <property type="entry name" value="Homeobox_CS"/>
</dbReference>
<dbReference type="InterPro" id="IPR009057">
    <property type="entry name" value="Homeodomain-like_sf"/>
</dbReference>
<dbReference type="PANTHER" id="PTHR46166">
    <property type="entry name" value="HOMEOBOX DOMAIN-CONTAINING PROTEIN"/>
    <property type="match status" value="1"/>
</dbReference>
<dbReference type="PANTHER" id="PTHR46166:SF1">
    <property type="entry name" value="HOMEOBOX PROTEIN HOX-D8"/>
    <property type="match status" value="1"/>
</dbReference>
<dbReference type="Pfam" id="PF00046">
    <property type="entry name" value="Homeodomain"/>
    <property type="match status" value="1"/>
</dbReference>
<dbReference type="PRINTS" id="PR00024">
    <property type="entry name" value="HOMEOBOX"/>
</dbReference>
<dbReference type="SMART" id="SM00389">
    <property type="entry name" value="HOX"/>
    <property type="match status" value="1"/>
</dbReference>
<dbReference type="SUPFAM" id="SSF46689">
    <property type="entry name" value="Homeodomain-like"/>
    <property type="match status" value="1"/>
</dbReference>
<dbReference type="PROSITE" id="PS00032">
    <property type="entry name" value="ANTENNAPEDIA"/>
    <property type="match status" value="1"/>
</dbReference>
<dbReference type="PROSITE" id="PS00027">
    <property type="entry name" value="HOMEOBOX_1"/>
    <property type="match status" value="1"/>
</dbReference>
<dbReference type="PROSITE" id="PS50071">
    <property type="entry name" value="HOMEOBOX_2"/>
    <property type="match status" value="1"/>
</dbReference>
<reference key="1">
    <citation type="submission" date="2006-08" db="EMBL/GenBank/DDBJ databases">
        <title>Positive selection in transcription factor genes on the human lineage.</title>
        <authorList>
            <person name="Nickel G.C."/>
            <person name="Tefft D.L."/>
            <person name="Trevarthen K."/>
            <person name="Funt J."/>
            <person name="Adams M.D."/>
        </authorList>
    </citation>
    <scope>NUCLEOTIDE SEQUENCE [GENOMIC DNA]</scope>
</reference>
<organism>
    <name type="scientific">Pan troglodytes</name>
    <name type="common">Chimpanzee</name>
    <dbReference type="NCBI Taxonomy" id="9598"/>
    <lineage>
        <taxon>Eukaryota</taxon>
        <taxon>Metazoa</taxon>
        <taxon>Chordata</taxon>
        <taxon>Craniata</taxon>
        <taxon>Vertebrata</taxon>
        <taxon>Euteleostomi</taxon>
        <taxon>Mammalia</taxon>
        <taxon>Eutheria</taxon>
        <taxon>Euarchontoglires</taxon>
        <taxon>Primates</taxon>
        <taxon>Haplorrhini</taxon>
        <taxon>Catarrhini</taxon>
        <taxon>Hominidae</taxon>
        <taxon>Pan</taxon>
    </lineage>
</organism>
<sequence length="290" mass="31925">MSSYFVNPLYSKYKAAAAAAAAAGEAINPTYYDCHFVPEVGGRHAAAAAALQLYGNSAAGFPHAPPQAHAHPHPSPPPSGTGCGGRDGRGQEYFHPGGGSPAAAYQAAPPPPPHPPPPPPPPPCGGIACHGEPAKFYGYDNLQRQPIFTTQQEAELVQYPDCKSSSGNIGEDPDHLNQSSSPSQMFPWMRPQAAPGRRRGRQTYSRFQTLELEKEFLFNPYLTRKRRIEVSHALALTERQVKIWFQNRRMKWKKENNKDKFPVSRQEVKDGETKKEAQELEEDRAEGLTN</sequence>
<proteinExistence type="inferred from homology"/>
<protein>
    <recommendedName>
        <fullName>Homeobox protein Hox-D8</fullName>
    </recommendedName>
</protein>